<protein>
    <recommendedName>
        <fullName>Dye-decolorizing peroxidase</fullName>
        <shortName evidence="4">DyP</shortName>
        <ecNumber evidence="2 3">1.11.1.7</ecNumber>
    </recommendedName>
</protein>
<accession>I6Y4U9</accession>
<name>DYP_MYCTU</name>
<proteinExistence type="evidence at protein level"/>
<reference key="1">
    <citation type="journal article" date="1998" name="Nature">
        <title>Deciphering the biology of Mycobacterium tuberculosis from the complete genome sequence.</title>
        <authorList>
            <person name="Cole S.T."/>
            <person name="Brosch R."/>
            <person name="Parkhill J."/>
            <person name="Garnier T."/>
            <person name="Churcher C.M."/>
            <person name="Harris D.E."/>
            <person name="Gordon S.V."/>
            <person name="Eiglmeier K."/>
            <person name="Gas S."/>
            <person name="Barry C.E. III"/>
            <person name="Tekaia F."/>
            <person name="Badcock K."/>
            <person name="Basham D."/>
            <person name="Brown D."/>
            <person name="Chillingworth T."/>
            <person name="Connor R."/>
            <person name="Davies R.M."/>
            <person name="Devlin K."/>
            <person name="Feltwell T."/>
            <person name="Gentles S."/>
            <person name="Hamlin N."/>
            <person name="Holroyd S."/>
            <person name="Hornsby T."/>
            <person name="Jagels K."/>
            <person name="Krogh A."/>
            <person name="McLean J."/>
            <person name="Moule S."/>
            <person name="Murphy L.D."/>
            <person name="Oliver S."/>
            <person name="Osborne J."/>
            <person name="Quail M.A."/>
            <person name="Rajandream M.A."/>
            <person name="Rogers J."/>
            <person name="Rutter S."/>
            <person name="Seeger K."/>
            <person name="Skelton S."/>
            <person name="Squares S."/>
            <person name="Squares R."/>
            <person name="Sulston J.E."/>
            <person name="Taylor K."/>
            <person name="Whitehead S."/>
            <person name="Barrell B.G."/>
        </authorList>
    </citation>
    <scope>NUCLEOTIDE SEQUENCE [LARGE SCALE GENOMIC DNA]</scope>
    <source>
        <strain>ATCC 25618 / H37Rv</strain>
    </source>
</reference>
<reference evidence="8" key="2">
    <citation type="journal article" date="2011" name="Mol. Cell. Proteomics">
        <title>Proteogenomic analysis of Mycobacterium tuberculosis by high resolution mass spectrometry.</title>
        <authorList>
            <person name="Kelkar D.S."/>
            <person name="Kumar D."/>
            <person name="Kumar P."/>
            <person name="Balakrishnan L."/>
            <person name="Muthusamy B."/>
            <person name="Yadav A.K."/>
            <person name="Shrivastava P."/>
            <person name="Marimuthu A."/>
            <person name="Anand S."/>
            <person name="Sundaram H."/>
            <person name="Kingsbury R."/>
            <person name="Harsha H.C."/>
            <person name="Nair B."/>
            <person name="Prasad T.S."/>
            <person name="Chauhan D.S."/>
            <person name="Katoch K."/>
            <person name="Katoch V.M."/>
            <person name="Kumar P."/>
            <person name="Chaerkady R."/>
            <person name="Ramachandran S."/>
            <person name="Dash D."/>
            <person name="Pandey A."/>
        </authorList>
    </citation>
    <scope>IDENTIFICATION BY MASS SPECTROMETRY [LARGE SCALE ANALYSIS]</scope>
    <source>
        <strain>ATCC 25618 / H37Rv</strain>
    </source>
</reference>
<reference key="3">
    <citation type="journal article" date="2014" name="J. Biol. Chem.">
        <title>Characterization of a Mycobacterium tuberculosis nanocompartment and its potential cargo proteins.</title>
        <authorList>
            <person name="Contreras H."/>
            <person name="Joens M.S."/>
            <person name="McMath L.M."/>
            <person name="Le V.P."/>
            <person name="Tullius M.V."/>
            <person name="Kimmey J.M."/>
            <person name="Bionghi N."/>
            <person name="Horwitz M.A."/>
            <person name="Fitzpatrick J.A."/>
            <person name="Goulding C.W."/>
        </authorList>
    </citation>
    <scope>FUNCTION</scope>
    <scope>CATALYTIC ACTIVITY</scope>
    <scope>SUBSTRATE SPECIFICITY</scope>
    <scope>HEME-BINDING</scope>
    <scope>SUBUNIT</scope>
    <scope>SUBCELLULAR LOCATION</scope>
    <scope>DOMAIN</scope>
    <scope>DISRUPTION PHENOTYPE</scope>
    <scope>MUTAGENESIS OF 312-LEU--ARG-335</scope>
    <source>
        <strain>H37Rv</strain>
    </source>
</reference>
<reference key="4">
    <citation type="journal article" date="2021" name="Elife">
        <title>A nanocompartment system contributes to defense against oxidative stress in Mycobacterium tuberculosis.</title>
        <authorList>
            <person name="Lien K.A."/>
            <person name="Dinshaw K."/>
            <person name="Nichols R.J."/>
            <person name="Cassidy-Amstutz C."/>
            <person name="Knight M."/>
            <person name="Singh R."/>
            <person name="Eltis L.D."/>
            <person name="Savage D.F."/>
            <person name="Stanley S.A."/>
        </authorList>
    </citation>
    <scope>IDENTIFICATION BY MASS SPECTROMETRY</scope>
    <scope>FUNCTION</scope>
    <scope>CATALYTIC ACTIVITY</scope>
    <scope>BIOPHYSICOCHEMICAL PROPERTIES</scope>
    <scope>COFACTOR</scope>
    <scope>SUBCELLULAR LOCATION</scope>
    <scope>DISRUPTION PHENOTYPE</scope>
    <source>
        <strain>H37Rv</strain>
    </source>
</reference>
<comment type="function">
    <text evidence="2 3">Cargo of a type 1 encapsulin nanocompartment in situ; this cargo protects against oxidative stress at low pH. When expressed in the cytoplasm (absence of the encapsulin shell gene) it is almost as protective as the intact nanocompartment; its encapsulation has a modest yet significant effect on protection against oxidative stress at low pH (PubMed:34751132). A heme-dependent peroxidase, it probably does not have deferrochelatase activity. Converts guaiacol and H2O2 to tetraguaiacol, also acts on 2,2'-azino-bis(3-ethylbenzothiazoline-6-sulfonic acid) (ABTS). Retains peroxidase activity when encapsulated but has a reduced set of substrates; acts on ABTS but not guaiacol (PubMed:24855650, PubMed:34751132).</text>
</comment>
<comment type="catalytic activity">
    <reaction evidence="2 3">
        <text>2 a phenolic donor + H2O2 = 2 a phenolic radical donor + 2 H2O</text>
        <dbReference type="Rhea" id="RHEA:56136"/>
        <dbReference type="ChEBI" id="CHEBI:15377"/>
        <dbReference type="ChEBI" id="CHEBI:16240"/>
        <dbReference type="ChEBI" id="CHEBI:139520"/>
        <dbReference type="ChEBI" id="CHEBI:139521"/>
        <dbReference type="EC" id="1.11.1.7"/>
    </reaction>
</comment>
<comment type="cofactor">
    <cofactor evidence="2">
        <name>heme b</name>
        <dbReference type="ChEBI" id="CHEBI:60344"/>
    </cofactor>
    <text evidence="2 7">Tetramer binds heme in a 1:1 ratio (PubMed:24855650). Addition of hemin to purified protein yields a tetrameric protein (Probable).</text>
</comment>
<comment type="biophysicochemical properties">
    <phDependence>
        <text evidence="3">Optimum pH is 4.0 or less.</text>
    </phDependence>
</comment>
<comment type="subunit">
    <text evidence="2">Homotetramer, presumably also in the encapsulin nanocompartment.</text>
</comment>
<comment type="subcellular location">
    <subcellularLocation>
        <location evidence="2">Encapsulin nanocompartment</location>
    </subcellularLocation>
    <text evidence="3 6">Consistently identified in encapsulin nanocompartments isolated in situ (PubMed:34751132). Located inside the nanocompartment in E.coli (Probable).</text>
</comment>
<comment type="domain">
    <text evidence="2">The C-terminus (residues 312-335) targets the protein to the encapsulin nanocompartment.</text>
</comment>
<comment type="disruption phenotype">
    <text evidence="2 3">No change in ability to grow on an exogenous siderophore (mycobactin), suggesting it does not have an iron-chelating function (PubMed:24855650). A double dyp-enc deletion mutant cannot produce encapsulin nanocompartments, cells are highly sensitive to H2O2 at pH 4.5 (mimics growth in the phagolysosome), mutants exhibit significant dysregulation of redox homeostasis, survive less well in C57BL/6 mouse-derived bone marrow cells and are more sensitive to pyrazinamide treatment in infected BALB/C mice (PubMed:34751132).</text>
</comment>
<comment type="similarity">
    <text evidence="5">Belongs to the DyP-type peroxidase family.</text>
</comment>
<dbReference type="EC" id="1.11.1.7" evidence="2 3"/>
<dbReference type="EMBL" id="AL123456">
    <property type="protein sequence ID" value="CCP43547.1"/>
    <property type="molecule type" value="Genomic_DNA"/>
</dbReference>
<dbReference type="RefSeq" id="NP_215314.1">
    <property type="nucleotide sequence ID" value="NC_000962.3"/>
</dbReference>
<dbReference type="RefSeq" id="WP_003404098.1">
    <property type="nucleotide sequence ID" value="NZ_NVQJ01000064.1"/>
</dbReference>
<dbReference type="PDB" id="9BKX">
    <property type="method" value="X-ray"/>
    <property type="resolution" value="3.15 A"/>
    <property type="chains" value="d/g/h/i/p/q/r/s/t=1-335"/>
</dbReference>
<dbReference type="PDBsum" id="9BKX"/>
<dbReference type="SMR" id="I6Y4U9"/>
<dbReference type="STRING" id="83332.Rv0799c"/>
<dbReference type="PaxDb" id="83332-Rv0799c"/>
<dbReference type="DNASU" id="885388"/>
<dbReference type="GeneID" id="885388"/>
<dbReference type="KEGG" id="mtu:Rv0799c"/>
<dbReference type="KEGG" id="mtv:RVBD_0799c"/>
<dbReference type="PATRIC" id="fig|83332.111.peg.886"/>
<dbReference type="TubercuList" id="Rv0799c"/>
<dbReference type="eggNOG" id="COG2837">
    <property type="taxonomic scope" value="Bacteria"/>
</dbReference>
<dbReference type="InParanoid" id="I6Y4U9"/>
<dbReference type="OrthoDB" id="3251355at2"/>
<dbReference type="PhylomeDB" id="I6Y4U9"/>
<dbReference type="Proteomes" id="UP000001584">
    <property type="component" value="Chromosome"/>
</dbReference>
<dbReference type="GO" id="GO:0005829">
    <property type="term" value="C:cytosol"/>
    <property type="evidence" value="ECO:0000318"/>
    <property type="project" value="GO_Central"/>
</dbReference>
<dbReference type="GO" id="GO:0140737">
    <property type="term" value="C:encapsulin nanocompartment"/>
    <property type="evidence" value="ECO:0000314"/>
    <property type="project" value="UniProtKB"/>
</dbReference>
<dbReference type="GO" id="GO:0020037">
    <property type="term" value="F:heme binding"/>
    <property type="evidence" value="ECO:0000314"/>
    <property type="project" value="UniProtKB"/>
</dbReference>
<dbReference type="GO" id="GO:0046872">
    <property type="term" value="F:metal ion binding"/>
    <property type="evidence" value="ECO:0007669"/>
    <property type="project" value="UniProtKB-KW"/>
</dbReference>
<dbReference type="GO" id="GO:0004601">
    <property type="term" value="F:peroxidase activity"/>
    <property type="evidence" value="ECO:0000314"/>
    <property type="project" value="UniProtKB"/>
</dbReference>
<dbReference type="InterPro" id="IPR011008">
    <property type="entry name" value="Dimeric_a/b-barrel"/>
</dbReference>
<dbReference type="InterPro" id="IPR048328">
    <property type="entry name" value="Dyp_perox_C"/>
</dbReference>
<dbReference type="InterPro" id="IPR048327">
    <property type="entry name" value="Dyp_perox_N"/>
</dbReference>
<dbReference type="InterPro" id="IPR006314">
    <property type="entry name" value="Dyp_peroxidase"/>
</dbReference>
<dbReference type="NCBIfam" id="TIGR01413">
    <property type="entry name" value="Dyp_perox_fam"/>
    <property type="match status" value="1"/>
</dbReference>
<dbReference type="PANTHER" id="PTHR30521">
    <property type="entry name" value="DEFERROCHELATASE/PEROXIDASE"/>
    <property type="match status" value="1"/>
</dbReference>
<dbReference type="PANTHER" id="PTHR30521:SF0">
    <property type="entry name" value="DYP-TYPE PEROXIDASE FAMILY PROTEIN"/>
    <property type="match status" value="1"/>
</dbReference>
<dbReference type="Pfam" id="PF20628">
    <property type="entry name" value="Dyp_perox_C"/>
    <property type="match status" value="1"/>
</dbReference>
<dbReference type="Pfam" id="PF04261">
    <property type="entry name" value="Dyp_perox_N"/>
    <property type="match status" value="1"/>
</dbReference>
<dbReference type="SUPFAM" id="SSF54909">
    <property type="entry name" value="Dimeric alpha+beta barrel"/>
    <property type="match status" value="1"/>
</dbReference>
<dbReference type="PROSITE" id="PS51404">
    <property type="entry name" value="DYP_PEROXIDASE"/>
    <property type="match status" value="1"/>
</dbReference>
<keyword id="KW-0002">3D-structure</keyword>
<keyword id="KW-1284">Encapsulin nanocompartment</keyword>
<keyword id="KW-0349">Heme</keyword>
<keyword id="KW-0408">Iron</keyword>
<keyword id="KW-0479">Metal-binding</keyword>
<keyword id="KW-0560">Oxidoreductase</keyword>
<keyword id="KW-0575">Peroxidase</keyword>
<keyword id="KW-1185">Reference proteome</keyword>
<keyword id="KW-0843">Virulence</keyword>
<evidence type="ECO:0000250" key="1">
    <source>
        <dbReference type="UniProtKB" id="Q47KB1"/>
    </source>
</evidence>
<evidence type="ECO:0000269" key="2">
    <source>
    </source>
</evidence>
<evidence type="ECO:0000269" key="3">
    <source>
    </source>
</evidence>
<evidence type="ECO:0000303" key="4">
    <source>
    </source>
</evidence>
<evidence type="ECO:0000305" key="5"/>
<evidence type="ECO:0000305" key="6">
    <source>
    </source>
</evidence>
<evidence type="ECO:0000305" key="7">
    <source>
    </source>
</evidence>
<evidence type="ECO:0007744" key="8">
    <source>
    </source>
</evidence>
<organism>
    <name type="scientific">Mycobacterium tuberculosis (strain ATCC 25618 / H37Rv)</name>
    <dbReference type="NCBI Taxonomy" id="83332"/>
    <lineage>
        <taxon>Bacteria</taxon>
        <taxon>Bacillati</taxon>
        <taxon>Actinomycetota</taxon>
        <taxon>Actinomycetes</taxon>
        <taxon>Mycobacteriales</taxon>
        <taxon>Mycobacteriaceae</taxon>
        <taxon>Mycobacterium</taxon>
        <taxon>Mycobacterium tuberculosis complex</taxon>
    </lineage>
</organism>
<feature type="chain" id="PRO_0000455327" description="Dye-decolorizing peroxidase">
    <location>
        <begin position="1"/>
        <end position="335"/>
    </location>
</feature>
<feature type="region of interest" description="Targeting peptide" evidence="2">
    <location>
        <begin position="312"/>
        <end position="335"/>
    </location>
</feature>
<feature type="active site" description="Proton acceptor" evidence="1">
    <location>
        <position position="149"/>
    </location>
</feature>
<feature type="binding site" description="proximal binding residue" evidence="1">
    <location>
        <position position="222"/>
    </location>
    <ligand>
        <name>heme</name>
        <dbReference type="ChEBI" id="CHEBI:30413"/>
    </ligand>
    <ligandPart>
        <name>Fe</name>
        <dbReference type="ChEBI" id="CHEBI:18248"/>
    </ligandPart>
</feature>
<feature type="mutagenesis site" description="Protein no longer targeted to encapsulin nanocompartments, retains enzyme activity." evidence="2">
    <location>
        <begin position="312"/>
        <end position="335"/>
    </location>
</feature>
<gene>
    <name evidence="4" type="primary">dyp</name>
    <name type="ordered locus">Rv0799c</name>
</gene>
<sequence>MAVPAVSPQPILAPLTPAAIFLVATIGADGEATVHDALSKISGLVRAIGFRDPTKHLSVVVSIGSDAWDRLFAGPRPTELHPFVELTGPRHTAPATPGDLLFHIRAETMDVCFELAGRILKSMGDAVTVVDEVHGFRFFDNRDLLGFVDGTENPSGPIAIKATTIGDEDRNFAGSCYVHVQKYVHDMASWESLSVTEQERVIGRTKLDDIELDDNAKPANSHVALNVITDDDGTERKIVRHNMPFGEVGKGEYGTYFIGYSRTPTVTEQMLRNMFLGDPAGNTDRVLDFSTAVTGGLFFSPTIDFLDHPPPLPQAATPTLAAGSLSIGSLKGSPR</sequence>